<organism>
    <name type="scientific">Influenza B virus (strain B/Ann Arbor/1/1986)</name>
    <dbReference type="NCBI Taxonomy" id="11521"/>
    <lineage>
        <taxon>Viruses</taxon>
        <taxon>Riboviria</taxon>
        <taxon>Orthornavirae</taxon>
        <taxon>Negarnaviricota</taxon>
        <taxon>Polyploviricotina</taxon>
        <taxon>Insthoviricetes</taxon>
        <taxon>Articulavirales</taxon>
        <taxon>Orthomyxoviridae</taxon>
        <taxon>Betainfluenzavirus</taxon>
        <taxon>Betainfluenzavirus influenzae</taxon>
        <taxon>Influenza B virus</taxon>
    </lineage>
</organism>
<protein>
    <recommendedName>
        <fullName>Hemagglutinin</fullName>
    </recommendedName>
    <component>
        <recommendedName>
            <fullName>Hemagglutinin HA1 chain</fullName>
        </recommendedName>
    </component>
</protein>
<name>HEMA_INBAA</name>
<keyword id="KW-1015">Disulfide bond</keyword>
<keyword id="KW-1170">Fusion of virus membrane with host endosomal membrane</keyword>
<keyword id="KW-1168">Fusion of virus membrane with host membrane</keyword>
<keyword id="KW-0325">Glycoprotein</keyword>
<keyword id="KW-0348">Hemagglutinin</keyword>
<keyword id="KW-1032">Host cell membrane</keyword>
<keyword id="KW-1043">Host membrane</keyword>
<keyword id="KW-0945">Host-virus interaction</keyword>
<keyword id="KW-0449">Lipoprotein</keyword>
<keyword id="KW-0472">Membrane</keyword>
<keyword id="KW-0564">Palmitate</keyword>
<keyword id="KW-0732">Signal</keyword>
<keyword id="KW-0812">Transmembrane</keyword>
<keyword id="KW-1161">Viral attachment to host cell</keyword>
<keyword id="KW-0261">Viral envelope protein</keyword>
<keyword id="KW-1162">Viral penetration into host cytoplasm</keyword>
<keyword id="KW-0946">Virion</keyword>
<keyword id="KW-1160">Virus entry into host cell</keyword>
<feature type="signal peptide">
    <location>
        <begin position="1" status="less than"/>
        <end position="7"/>
    </location>
</feature>
<feature type="chain" id="PRO_0000039085" description="Hemagglutinin HA1 chain">
    <location>
        <begin position="8"/>
        <end position="353"/>
    </location>
</feature>
<feature type="glycosylation site" description="N-linked (GlcNAc...) asparagine; by host" evidence="2">
    <location>
        <position position="32"/>
    </location>
</feature>
<feature type="glycosylation site" description="N-linked (GlcNAc...) asparagine; by host" evidence="2">
    <location>
        <position position="66"/>
    </location>
</feature>
<feature type="glycosylation site" description="N-linked (GlcNAc...) asparagine; by host" evidence="2">
    <location>
        <position position="152"/>
    </location>
</feature>
<feature type="glycosylation site" description="N-linked (GlcNAc...) asparagine; by host" evidence="2">
    <location>
        <position position="173"/>
    </location>
</feature>
<feature type="glycosylation site" description="N-linked (GlcNAc...) asparagine; by host" evidence="2">
    <location>
        <position position="311"/>
    </location>
</feature>
<feature type="glycosylation site" description="N-linked (GlcNAc...) asparagine; by host" evidence="2">
    <location>
        <position position="340"/>
    </location>
</feature>
<feature type="non-terminal residue">
    <location>
        <position position="1"/>
    </location>
</feature>
<feature type="non-terminal residue">
    <location>
        <position position="353"/>
    </location>
</feature>
<organismHost>
    <name type="scientific">Homo sapiens</name>
    <name type="common">Human</name>
    <dbReference type="NCBI Taxonomy" id="9606"/>
</organismHost>
<evidence type="ECO:0000250" key="1"/>
<evidence type="ECO:0000255" key="2"/>
<evidence type="ECO:0000305" key="3"/>
<comment type="function">
    <text>Binds to sialic acid-containing receptors on the cell surface, bringing about the attachment of the virus particle to the cell. Plays a major role in the determination of host range restriction and virulence. Class I viral fusion protein. Responsible for penetration of the virus into the cell cytoplasm by mediating the fusion of the membrane of the endocytosed virus particle with the endosomal membrane. Low pH in endosomes induce an irreversible conformational change in HA2, releasing the fusion hydrophobic peptide. Several trimers are required to form a competent fusion pore.</text>
</comment>
<comment type="subunit">
    <text>Homotrimer of disulfide-linked HA1-HA2.</text>
</comment>
<comment type="subcellular location">
    <subcellularLocation>
        <location evidence="3">Virion membrane</location>
        <topology evidence="3">Single-pass type I membrane protein</topology>
    </subcellularLocation>
    <subcellularLocation>
        <location>Host apical cell membrane</location>
        <topology>Single-pass type I membrane protein</topology>
    </subcellularLocation>
    <text>Targeted to the apical plasma membrane in epithelial polarized cells through a signal present in the transmembrane domain. Associated with glycosphingolipid- and cholesterol-enriched detergent-resistant lipid rafts.</text>
</comment>
<comment type="PTM">
    <text evidence="1">In natural infection, inactive HA is matured into HA1 and HA2 outside the cell by one or more trypsin-like, arginine-specific endoprotease secreted by the bronchial epithelial cells. One identified protease that may be involved in this process is secreted in lungs by club cells (By similarity).</text>
</comment>
<comment type="PTM">
    <text evidence="1">Palmitoylated.</text>
</comment>
<comment type="miscellaneous">
    <text>Major glycoprotein, comprises over 80% of the envelope proteins present in virus particle.</text>
</comment>
<comment type="miscellaneous">
    <text>The extent of infection into host organism is determined by HA. Influenza viruses bud from the apical surface of polarized epithelial cells (e.g. bronchial epithelial cells) into lumen of lungs and are therefore usually pneumotropic. The reason is that HA is cleaved by tryptase clara which is restricted to lungs. However, HAs of H5 and H7 pantropic avian viruses subtypes can be cleaved by furin and subtilisin-type enzymes, allowing the virus to grow in other organs than lungs.</text>
</comment>
<comment type="miscellaneous">
    <text>The influenza B genome consist of 8 RNA segments. Genetic variation of hemagglutinin and/or neuraminidase genes results in the emergence of new influenza strains. The mechanism of variation can be the result of point mutations or the result of genetic reassortment between segments of two different strains.</text>
</comment>
<comment type="similarity">
    <text evidence="3">Belongs to the influenza viruses hemagglutinin family.</text>
</comment>
<dbReference type="EMBL" id="M21874">
    <property type="protein sequence ID" value="AAA43696.1"/>
    <property type="molecule type" value="Genomic_RNA"/>
</dbReference>
<dbReference type="SMR" id="P12440"/>
<dbReference type="GlyCosmos" id="P12440">
    <property type="glycosylation" value="6 sites, No reported glycans"/>
</dbReference>
<dbReference type="GO" id="GO:0020002">
    <property type="term" value="C:host cell plasma membrane"/>
    <property type="evidence" value="ECO:0007669"/>
    <property type="project" value="UniProtKB-SubCell"/>
</dbReference>
<dbReference type="GO" id="GO:0016020">
    <property type="term" value="C:membrane"/>
    <property type="evidence" value="ECO:0007669"/>
    <property type="project" value="UniProtKB-KW"/>
</dbReference>
<dbReference type="GO" id="GO:0019031">
    <property type="term" value="C:viral envelope"/>
    <property type="evidence" value="ECO:0007669"/>
    <property type="project" value="UniProtKB-KW"/>
</dbReference>
<dbReference type="GO" id="GO:0055036">
    <property type="term" value="C:virion membrane"/>
    <property type="evidence" value="ECO:0007669"/>
    <property type="project" value="UniProtKB-SubCell"/>
</dbReference>
<dbReference type="GO" id="GO:0046789">
    <property type="term" value="F:host cell surface receptor binding"/>
    <property type="evidence" value="ECO:0007669"/>
    <property type="project" value="InterPro"/>
</dbReference>
<dbReference type="GO" id="GO:0039654">
    <property type="term" value="P:fusion of virus membrane with host endosome membrane"/>
    <property type="evidence" value="ECO:0007669"/>
    <property type="project" value="UniProtKB-KW"/>
</dbReference>
<dbReference type="GO" id="GO:0019064">
    <property type="term" value="P:fusion of virus membrane with host plasma membrane"/>
    <property type="evidence" value="ECO:0007669"/>
    <property type="project" value="InterPro"/>
</dbReference>
<dbReference type="GO" id="GO:0046718">
    <property type="term" value="P:symbiont entry into host cell"/>
    <property type="evidence" value="ECO:0007669"/>
    <property type="project" value="UniProtKB-KW"/>
</dbReference>
<dbReference type="GO" id="GO:0019062">
    <property type="term" value="P:virion attachment to host cell"/>
    <property type="evidence" value="ECO:0007669"/>
    <property type="project" value="UniProtKB-KW"/>
</dbReference>
<dbReference type="Gene3D" id="3.90.209.20">
    <property type="match status" value="1"/>
</dbReference>
<dbReference type="Gene3D" id="2.10.77.10">
    <property type="entry name" value="Hemagglutinin Chain A, Domain 2"/>
    <property type="match status" value="1"/>
</dbReference>
<dbReference type="InterPro" id="IPR008980">
    <property type="entry name" value="Capsid_hemagglutn"/>
</dbReference>
<dbReference type="InterPro" id="IPR013828">
    <property type="entry name" value="Hemagglutn_HA1_a/b_dom_sf"/>
</dbReference>
<dbReference type="InterPro" id="IPR001364">
    <property type="entry name" value="Hemagglutn_influenz_A/B"/>
</dbReference>
<dbReference type="Pfam" id="PF00509">
    <property type="entry name" value="Hemagglutinin"/>
    <property type="match status" value="1"/>
</dbReference>
<dbReference type="SUPFAM" id="SSF49818">
    <property type="entry name" value="Viral protein domain"/>
    <property type="match status" value="1"/>
</dbReference>
<accession>P12440</accession>
<proteinExistence type="inferred from homology"/>
<gene>
    <name type="primary">HA</name>
</gene>
<sequence>MVVTSNADRICTGITSSNSPHVVKTATQGEVNVTGVIPLTTTPTKSHFANLKGTKTRGKLCPKCLNCTDLDVALGRPKCMGTIPSAKASILHEVKPVTSGCFPIMHDRTKIRQLPNLLRGYENIRLSTHNVINAEAAPGGPYIVGTSGSCPNVTNGNGFFATMAWAVPKNNNNKTATNPLTVEVPFICTEGEDQITVWGFHSDDETQMVKLYGDSKPQKFTSSANGVTTHYVSQIGGFPKQAEDGGLPQSGRIVVDYMVQKSGKTGTITYQRGILLPQKVWCASGRSKVIKGSLPLIGEADCLHEKYGGLNKSKPYYTGEHAKAIGNCPIWVKTPLKLANGTKYRPPAKLLKE</sequence>
<reference key="1">
    <citation type="journal article" date="1988" name="Virology">
        <title>Sequence analysis of the hemagglutinin of B/Ann Arbor/1/86, an epidemiologically significant variant of influenza B virus.</title>
        <authorList>
            <person name="Bootman J.S."/>
            <person name="Robertson J.S."/>
        </authorList>
    </citation>
    <scope>NUCLEOTIDE SEQUENCE [GENOMIC RNA]</scope>
</reference>